<dbReference type="EMBL" id="CP001096">
    <property type="protein sequence ID" value="ACF02156.1"/>
    <property type="molecule type" value="Genomic_DNA"/>
</dbReference>
<dbReference type="RefSeq" id="WP_011158784.1">
    <property type="nucleotide sequence ID" value="NC_011004.1"/>
</dbReference>
<dbReference type="SMR" id="B3QBW9"/>
<dbReference type="GeneID" id="66894325"/>
<dbReference type="KEGG" id="rpt:Rpal_3656"/>
<dbReference type="HOGENOM" id="CLU_093315_2_2_5"/>
<dbReference type="OrthoDB" id="9807419at2"/>
<dbReference type="Proteomes" id="UP000001725">
    <property type="component" value="Chromosome"/>
</dbReference>
<dbReference type="GO" id="GO:1990904">
    <property type="term" value="C:ribonucleoprotein complex"/>
    <property type="evidence" value="ECO:0007669"/>
    <property type="project" value="UniProtKB-KW"/>
</dbReference>
<dbReference type="GO" id="GO:0005840">
    <property type="term" value="C:ribosome"/>
    <property type="evidence" value="ECO:0007669"/>
    <property type="project" value="UniProtKB-KW"/>
</dbReference>
<dbReference type="GO" id="GO:0019843">
    <property type="term" value="F:rRNA binding"/>
    <property type="evidence" value="ECO:0007669"/>
    <property type="project" value="UniProtKB-UniRule"/>
</dbReference>
<dbReference type="GO" id="GO:0003735">
    <property type="term" value="F:structural constituent of ribosome"/>
    <property type="evidence" value="ECO:0007669"/>
    <property type="project" value="InterPro"/>
</dbReference>
<dbReference type="GO" id="GO:0006412">
    <property type="term" value="P:translation"/>
    <property type="evidence" value="ECO:0007669"/>
    <property type="project" value="UniProtKB-UniRule"/>
</dbReference>
<dbReference type="CDD" id="cd06089">
    <property type="entry name" value="KOW_RPL26"/>
    <property type="match status" value="1"/>
</dbReference>
<dbReference type="FunFam" id="2.30.30.30:FF:000051">
    <property type="entry name" value="50S ribosomal protein L24"/>
    <property type="match status" value="1"/>
</dbReference>
<dbReference type="Gene3D" id="2.30.30.30">
    <property type="match status" value="1"/>
</dbReference>
<dbReference type="HAMAP" id="MF_01326_B">
    <property type="entry name" value="Ribosomal_uL24_B"/>
    <property type="match status" value="1"/>
</dbReference>
<dbReference type="InterPro" id="IPR005824">
    <property type="entry name" value="KOW"/>
</dbReference>
<dbReference type="InterPro" id="IPR014722">
    <property type="entry name" value="Rib_uL2_dom2"/>
</dbReference>
<dbReference type="InterPro" id="IPR003256">
    <property type="entry name" value="Ribosomal_uL24"/>
</dbReference>
<dbReference type="InterPro" id="IPR005825">
    <property type="entry name" value="Ribosomal_uL24_CS"/>
</dbReference>
<dbReference type="InterPro" id="IPR041988">
    <property type="entry name" value="Ribosomal_uL24_KOW"/>
</dbReference>
<dbReference type="InterPro" id="IPR008991">
    <property type="entry name" value="Translation_prot_SH3-like_sf"/>
</dbReference>
<dbReference type="NCBIfam" id="TIGR01079">
    <property type="entry name" value="rplX_bact"/>
    <property type="match status" value="1"/>
</dbReference>
<dbReference type="PANTHER" id="PTHR12903">
    <property type="entry name" value="MITOCHONDRIAL RIBOSOMAL PROTEIN L24"/>
    <property type="match status" value="1"/>
</dbReference>
<dbReference type="Pfam" id="PF00467">
    <property type="entry name" value="KOW"/>
    <property type="match status" value="1"/>
</dbReference>
<dbReference type="Pfam" id="PF17136">
    <property type="entry name" value="ribosomal_L24"/>
    <property type="match status" value="1"/>
</dbReference>
<dbReference type="SMART" id="SM00739">
    <property type="entry name" value="KOW"/>
    <property type="match status" value="1"/>
</dbReference>
<dbReference type="SUPFAM" id="SSF50104">
    <property type="entry name" value="Translation proteins SH3-like domain"/>
    <property type="match status" value="1"/>
</dbReference>
<dbReference type="PROSITE" id="PS01108">
    <property type="entry name" value="RIBOSOMAL_L24"/>
    <property type="match status" value="1"/>
</dbReference>
<gene>
    <name evidence="1" type="primary">rplX</name>
    <name type="ordered locus">Rpal_3656</name>
</gene>
<comment type="function">
    <text evidence="1">One of two assembly initiator proteins, it binds directly to the 5'-end of the 23S rRNA, where it nucleates assembly of the 50S subunit.</text>
</comment>
<comment type="function">
    <text evidence="1">One of the proteins that surrounds the polypeptide exit tunnel on the outside of the subunit.</text>
</comment>
<comment type="subunit">
    <text evidence="1">Part of the 50S ribosomal subunit.</text>
</comment>
<comment type="similarity">
    <text evidence="1">Belongs to the universal ribosomal protein uL24 family.</text>
</comment>
<accession>B3QBW9</accession>
<organism>
    <name type="scientific">Rhodopseudomonas palustris (strain TIE-1)</name>
    <dbReference type="NCBI Taxonomy" id="395960"/>
    <lineage>
        <taxon>Bacteria</taxon>
        <taxon>Pseudomonadati</taxon>
        <taxon>Pseudomonadota</taxon>
        <taxon>Alphaproteobacteria</taxon>
        <taxon>Hyphomicrobiales</taxon>
        <taxon>Nitrobacteraceae</taxon>
        <taxon>Rhodopseudomonas</taxon>
    </lineage>
</organism>
<protein>
    <recommendedName>
        <fullName evidence="1">Large ribosomal subunit protein uL24</fullName>
    </recommendedName>
    <alternativeName>
        <fullName evidence="2">50S ribosomal protein L24</fullName>
    </alternativeName>
</protein>
<feature type="chain" id="PRO_1000142030" description="Large ribosomal subunit protein uL24">
    <location>
        <begin position="1"/>
        <end position="104"/>
    </location>
</feature>
<keyword id="KW-0687">Ribonucleoprotein</keyword>
<keyword id="KW-0689">Ribosomal protein</keyword>
<keyword id="KW-0694">RNA-binding</keyword>
<keyword id="KW-0699">rRNA-binding</keyword>
<reference key="1">
    <citation type="submission" date="2008-05" db="EMBL/GenBank/DDBJ databases">
        <title>Complete sequence of Rhodopseudomonas palustris TIE-1.</title>
        <authorList>
            <consortium name="US DOE Joint Genome Institute"/>
            <person name="Lucas S."/>
            <person name="Copeland A."/>
            <person name="Lapidus A."/>
            <person name="Glavina del Rio T."/>
            <person name="Dalin E."/>
            <person name="Tice H."/>
            <person name="Pitluck S."/>
            <person name="Chain P."/>
            <person name="Malfatti S."/>
            <person name="Shin M."/>
            <person name="Vergez L."/>
            <person name="Lang D."/>
            <person name="Schmutz J."/>
            <person name="Larimer F."/>
            <person name="Land M."/>
            <person name="Hauser L."/>
            <person name="Kyrpides N."/>
            <person name="Mikhailova N."/>
            <person name="Emerson D."/>
            <person name="Newman D.K."/>
            <person name="Roden E."/>
            <person name="Richardson P."/>
        </authorList>
    </citation>
    <scope>NUCLEOTIDE SEQUENCE [LARGE SCALE GENOMIC DNA]</scope>
    <source>
        <strain>TIE-1</strain>
    </source>
</reference>
<evidence type="ECO:0000255" key="1">
    <source>
        <dbReference type="HAMAP-Rule" id="MF_01326"/>
    </source>
</evidence>
<evidence type="ECO:0000305" key="2"/>
<proteinExistence type="inferred from homology"/>
<sequence length="104" mass="11130">MAAKIRKGDKVIVLSGRDKGRTGEVFEVRPDAGKALVRGINVVKRHQKQTQTQEGGIISKEAPIDLSNIAIVGKDGKPTRVGFKILADGKKVRVAKRSGAEIDG</sequence>
<name>RL24_RHOPT</name>